<accession>A3PAI6</accession>
<evidence type="ECO:0000255" key="1">
    <source>
        <dbReference type="HAMAP-Rule" id="MF_01354"/>
    </source>
</evidence>
<name>NDHO_PROM0</name>
<feature type="chain" id="PRO_0000353642" description="NAD(P)H-quinone oxidoreductase subunit O">
    <location>
        <begin position="1"/>
        <end position="78"/>
    </location>
</feature>
<comment type="function">
    <text evidence="1">NDH-1 shuttles electrons from an unknown electron donor, via FMN and iron-sulfur (Fe-S) centers, to quinones in the respiratory and/or the photosynthetic chain. The immediate electron acceptor for the enzyme in this species is believed to be plastoquinone. Couples the redox reaction to proton translocation, and thus conserves the redox energy in a proton gradient. Cyanobacterial NDH-1 also plays a role in inorganic carbon-concentration.</text>
</comment>
<comment type="catalytic activity">
    <reaction evidence="1">
        <text>a plastoquinone + NADH + (n+1) H(+)(in) = a plastoquinol + NAD(+) + n H(+)(out)</text>
        <dbReference type="Rhea" id="RHEA:42608"/>
        <dbReference type="Rhea" id="RHEA-COMP:9561"/>
        <dbReference type="Rhea" id="RHEA-COMP:9562"/>
        <dbReference type="ChEBI" id="CHEBI:15378"/>
        <dbReference type="ChEBI" id="CHEBI:17757"/>
        <dbReference type="ChEBI" id="CHEBI:57540"/>
        <dbReference type="ChEBI" id="CHEBI:57945"/>
        <dbReference type="ChEBI" id="CHEBI:62192"/>
    </reaction>
</comment>
<comment type="catalytic activity">
    <reaction evidence="1">
        <text>a plastoquinone + NADPH + (n+1) H(+)(in) = a plastoquinol + NADP(+) + n H(+)(out)</text>
        <dbReference type="Rhea" id="RHEA:42612"/>
        <dbReference type="Rhea" id="RHEA-COMP:9561"/>
        <dbReference type="Rhea" id="RHEA-COMP:9562"/>
        <dbReference type="ChEBI" id="CHEBI:15378"/>
        <dbReference type="ChEBI" id="CHEBI:17757"/>
        <dbReference type="ChEBI" id="CHEBI:57783"/>
        <dbReference type="ChEBI" id="CHEBI:58349"/>
        <dbReference type="ChEBI" id="CHEBI:62192"/>
    </reaction>
</comment>
<comment type="subunit">
    <text evidence="1">NDH-1 can be composed of about 15 different subunits; different subcomplexes with different compositions have been identified which probably have different functions.</text>
</comment>
<comment type="subcellular location">
    <subcellularLocation>
        <location evidence="1">Cellular thylakoid membrane</location>
        <topology evidence="1">Peripheral membrane protein</topology>
        <orientation evidence="1">Cytoplasmic side</orientation>
    </subcellularLocation>
</comment>
<comment type="similarity">
    <text evidence="1">Belongs to the complex I NdhO subunit family.</text>
</comment>
<protein>
    <recommendedName>
        <fullName evidence="1">NAD(P)H-quinone oxidoreductase subunit O</fullName>
        <ecNumber evidence="1">7.1.1.-</ecNumber>
    </recommendedName>
    <alternativeName>
        <fullName evidence="1">NAD(P)H dehydrogenase I subunit O</fullName>
    </alternativeName>
    <alternativeName>
        <fullName>NDH-1 subunit O</fullName>
    </alternativeName>
    <alternativeName>
        <fullName>NDH-O</fullName>
    </alternativeName>
</protein>
<keyword id="KW-0472">Membrane</keyword>
<keyword id="KW-0520">NAD</keyword>
<keyword id="KW-0521">NADP</keyword>
<keyword id="KW-0618">Plastoquinone</keyword>
<keyword id="KW-0874">Quinone</keyword>
<keyword id="KW-1185">Reference proteome</keyword>
<keyword id="KW-0793">Thylakoid</keyword>
<keyword id="KW-1278">Translocase</keyword>
<keyword id="KW-0813">Transport</keyword>
<reference key="1">
    <citation type="journal article" date="2007" name="PLoS Genet.">
        <title>Patterns and implications of gene gain and loss in the evolution of Prochlorococcus.</title>
        <authorList>
            <person name="Kettler G.C."/>
            <person name="Martiny A.C."/>
            <person name="Huang K."/>
            <person name="Zucker J."/>
            <person name="Coleman M.L."/>
            <person name="Rodrigue S."/>
            <person name="Chen F."/>
            <person name="Lapidus A."/>
            <person name="Ferriera S."/>
            <person name="Johnson J."/>
            <person name="Steglich C."/>
            <person name="Church G.M."/>
            <person name="Richardson P."/>
            <person name="Chisholm S.W."/>
        </authorList>
    </citation>
    <scope>NUCLEOTIDE SEQUENCE [LARGE SCALE GENOMIC DNA]</scope>
    <source>
        <strain>MIT 9301</strain>
    </source>
</reference>
<proteinExistence type="inferred from homology"/>
<gene>
    <name evidence="1" type="primary">ndhO</name>
    <name type="ordered locus">P9301_01381</name>
</gene>
<sequence>MTDSIPKKPLKKGSLVFVDKENYIKSIEALASDHDLPNYVFEGPGEILSVKDEYAQIRWRRPVPDVWFKLEQLKEYLQ</sequence>
<organism>
    <name type="scientific">Prochlorococcus marinus (strain MIT 9301)</name>
    <dbReference type="NCBI Taxonomy" id="167546"/>
    <lineage>
        <taxon>Bacteria</taxon>
        <taxon>Bacillati</taxon>
        <taxon>Cyanobacteriota</taxon>
        <taxon>Cyanophyceae</taxon>
        <taxon>Synechococcales</taxon>
        <taxon>Prochlorococcaceae</taxon>
        <taxon>Prochlorococcus</taxon>
    </lineage>
</organism>
<dbReference type="EC" id="7.1.1.-" evidence="1"/>
<dbReference type="EMBL" id="CP000576">
    <property type="protein sequence ID" value="ABO16761.1"/>
    <property type="molecule type" value="Genomic_DNA"/>
</dbReference>
<dbReference type="RefSeq" id="WP_011862164.1">
    <property type="nucleotide sequence ID" value="NC_009091.1"/>
</dbReference>
<dbReference type="SMR" id="A3PAI6"/>
<dbReference type="STRING" id="167546.P9301_01381"/>
<dbReference type="KEGG" id="pmg:P9301_01381"/>
<dbReference type="eggNOG" id="ENOG5031XXZ">
    <property type="taxonomic scope" value="Bacteria"/>
</dbReference>
<dbReference type="HOGENOM" id="CLU_195299_0_0_3"/>
<dbReference type="OrthoDB" id="426633at2"/>
<dbReference type="Proteomes" id="UP000001430">
    <property type="component" value="Chromosome"/>
</dbReference>
<dbReference type="GO" id="GO:0031676">
    <property type="term" value="C:plasma membrane-derived thylakoid membrane"/>
    <property type="evidence" value="ECO:0007669"/>
    <property type="project" value="UniProtKB-SubCell"/>
</dbReference>
<dbReference type="GO" id="GO:0016655">
    <property type="term" value="F:oxidoreductase activity, acting on NAD(P)H, quinone or similar compound as acceptor"/>
    <property type="evidence" value="ECO:0007669"/>
    <property type="project" value="UniProtKB-UniRule"/>
</dbReference>
<dbReference type="GO" id="GO:0048038">
    <property type="term" value="F:quinone binding"/>
    <property type="evidence" value="ECO:0007669"/>
    <property type="project" value="UniProtKB-KW"/>
</dbReference>
<dbReference type="HAMAP" id="MF_01354">
    <property type="entry name" value="NDH1_NDH1O"/>
    <property type="match status" value="1"/>
</dbReference>
<dbReference type="InterPro" id="IPR020905">
    <property type="entry name" value="NdhO"/>
</dbReference>
<dbReference type="Pfam" id="PF11910">
    <property type="entry name" value="NdhO"/>
    <property type="match status" value="1"/>
</dbReference>